<keyword id="KW-0067">ATP-binding</keyword>
<keyword id="KW-0436">Ligase</keyword>
<keyword id="KW-0460">Magnesium</keyword>
<keyword id="KW-0479">Metal-binding</keyword>
<keyword id="KW-0547">Nucleotide-binding</keyword>
<keyword id="KW-0816">Tricarboxylic acid cycle</keyword>
<proteinExistence type="inferred from homology"/>
<gene>
    <name evidence="1" type="primary">sucC</name>
    <name type="ordered locus">RrIowa_0713</name>
</gene>
<dbReference type="EC" id="6.2.1.5" evidence="1"/>
<dbReference type="EMBL" id="CP000766">
    <property type="protein sequence ID" value="ABY72571.1"/>
    <property type="molecule type" value="Genomic_DNA"/>
</dbReference>
<dbReference type="RefSeq" id="WP_012150790.1">
    <property type="nucleotide sequence ID" value="NC_010263.3"/>
</dbReference>
<dbReference type="SMR" id="B0BXJ5"/>
<dbReference type="GeneID" id="79937343"/>
<dbReference type="KEGG" id="rrj:RrIowa_0713"/>
<dbReference type="eggNOG" id="COG0045">
    <property type="taxonomic scope" value="Bacteria"/>
</dbReference>
<dbReference type="HOGENOM" id="CLU_037430_0_2_5"/>
<dbReference type="UniPathway" id="UPA00223">
    <property type="reaction ID" value="UER00999"/>
</dbReference>
<dbReference type="Proteomes" id="UP000000796">
    <property type="component" value="Chromosome"/>
</dbReference>
<dbReference type="GO" id="GO:0005829">
    <property type="term" value="C:cytosol"/>
    <property type="evidence" value="ECO:0007669"/>
    <property type="project" value="TreeGrafter"/>
</dbReference>
<dbReference type="GO" id="GO:0042709">
    <property type="term" value="C:succinate-CoA ligase complex"/>
    <property type="evidence" value="ECO:0007669"/>
    <property type="project" value="TreeGrafter"/>
</dbReference>
<dbReference type="GO" id="GO:0005524">
    <property type="term" value="F:ATP binding"/>
    <property type="evidence" value="ECO:0007669"/>
    <property type="project" value="UniProtKB-UniRule"/>
</dbReference>
<dbReference type="GO" id="GO:0000287">
    <property type="term" value="F:magnesium ion binding"/>
    <property type="evidence" value="ECO:0007669"/>
    <property type="project" value="UniProtKB-UniRule"/>
</dbReference>
<dbReference type="GO" id="GO:0004775">
    <property type="term" value="F:succinate-CoA ligase (ADP-forming) activity"/>
    <property type="evidence" value="ECO:0007669"/>
    <property type="project" value="UniProtKB-UniRule"/>
</dbReference>
<dbReference type="GO" id="GO:0004776">
    <property type="term" value="F:succinate-CoA ligase (GDP-forming) activity"/>
    <property type="evidence" value="ECO:0007669"/>
    <property type="project" value="RHEA"/>
</dbReference>
<dbReference type="GO" id="GO:0006104">
    <property type="term" value="P:succinyl-CoA metabolic process"/>
    <property type="evidence" value="ECO:0007669"/>
    <property type="project" value="TreeGrafter"/>
</dbReference>
<dbReference type="GO" id="GO:0006099">
    <property type="term" value="P:tricarboxylic acid cycle"/>
    <property type="evidence" value="ECO:0007669"/>
    <property type="project" value="UniProtKB-UniRule"/>
</dbReference>
<dbReference type="FunFam" id="3.30.1490.20:FF:000002">
    <property type="entry name" value="Succinate--CoA ligase [ADP-forming] subunit beta"/>
    <property type="match status" value="1"/>
</dbReference>
<dbReference type="FunFam" id="3.30.470.20:FF:000002">
    <property type="entry name" value="Succinate--CoA ligase [ADP-forming] subunit beta"/>
    <property type="match status" value="1"/>
</dbReference>
<dbReference type="FunFam" id="3.40.50.261:FF:000001">
    <property type="entry name" value="Succinate--CoA ligase [ADP-forming] subunit beta"/>
    <property type="match status" value="1"/>
</dbReference>
<dbReference type="Gene3D" id="3.30.1490.20">
    <property type="entry name" value="ATP-grasp fold, A domain"/>
    <property type="match status" value="1"/>
</dbReference>
<dbReference type="Gene3D" id="3.30.470.20">
    <property type="entry name" value="ATP-grasp fold, B domain"/>
    <property type="match status" value="1"/>
</dbReference>
<dbReference type="Gene3D" id="3.40.50.261">
    <property type="entry name" value="Succinyl-CoA synthetase domains"/>
    <property type="match status" value="1"/>
</dbReference>
<dbReference type="HAMAP" id="MF_00558">
    <property type="entry name" value="Succ_CoA_beta"/>
    <property type="match status" value="1"/>
</dbReference>
<dbReference type="InterPro" id="IPR011761">
    <property type="entry name" value="ATP-grasp"/>
</dbReference>
<dbReference type="InterPro" id="IPR013650">
    <property type="entry name" value="ATP-grasp_succ-CoA_synth-type"/>
</dbReference>
<dbReference type="InterPro" id="IPR013815">
    <property type="entry name" value="ATP_grasp_subdomain_1"/>
</dbReference>
<dbReference type="InterPro" id="IPR017866">
    <property type="entry name" value="Succ-CoA_synthase_bsu_CS"/>
</dbReference>
<dbReference type="InterPro" id="IPR005811">
    <property type="entry name" value="SUCC_ACL_C"/>
</dbReference>
<dbReference type="InterPro" id="IPR005809">
    <property type="entry name" value="Succ_CoA_ligase-like_bsu"/>
</dbReference>
<dbReference type="InterPro" id="IPR016102">
    <property type="entry name" value="Succinyl-CoA_synth-like"/>
</dbReference>
<dbReference type="NCBIfam" id="NF001913">
    <property type="entry name" value="PRK00696.1"/>
    <property type="match status" value="1"/>
</dbReference>
<dbReference type="NCBIfam" id="TIGR01016">
    <property type="entry name" value="sucCoAbeta"/>
    <property type="match status" value="1"/>
</dbReference>
<dbReference type="PANTHER" id="PTHR11815:SF10">
    <property type="entry name" value="SUCCINATE--COA LIGASE [GDP-FORMING] SUBUNIT BETA, MITOCHONDRIAL"/>
    <property type="match status" value="1"/>
</dbReference>
<dbReference type="PANTHER" id="PTHR11815">
    <property type="entry name" value="SUCCINYL-COA SYNTHETASE BETA CHAIN"/>
    <property type="match status" value="1"/>
</dbReference>
<dbReference type="Pfam" id="PF08442">
    <property type="entry name" value="ATP-grasp_2"/>
    <property type="match status" value="1"/>
</dbReference>
<dbReference type="Pfam" id="PF00549">
    <property type="entry name" value="Ligase_CoA"/>
    <property type="match status" value="1"/>
</dbReference>
<dbReference type="PIRSF" id="PIRSF001554">
    <property type="entry name" value="SucCS_beta"/>
    <property type="match status" value="1"/>
</dbReference>
<dbReference type="SUPFAM" id="SSF56059">
    <property type="entry name" value="Glutathione synthetase ATP-binding domain-like"/>
    <property type="match status" value="1"/>
</dbReference>
<dbReference type="SUPFAM" id="SSF52210">
    <property type="entry name" value="Succinyl-CoA synthetase domains"/>
    <property type="match status" value="1"/>
</dbReference>
<dbReference type="PROSITE" id="PS50975">
    <property type="entry name" value="ATP_GRASP"/>
    <property type="match status" value="1"/>
</dbReference>
<dbReference type="PROSITE" id="PS01217">
    <property type="entry name" value="SUCCINYL_COA_LIG_3"/>
    <property type="match status" value="1"/>
</dbReference>
<evidence type="ECO:0000255" key="1">
    <source>
        <dbReference type="HAMAP-Rule" id="MF_00558"/>
    </source>
</evidence>
<protein>
    <recommendedName>
        <fullName evidence="1">Succinate--CoA ligase [ADP-forming] subunit beta</fullName>
        <ecNumber evidence="1">6.2.1.5</ecNumber>
    </recommendedName>
    <alternativeName>
        <fullName evidence="1">Succinyl-CoA synthetase subunit beta</fullName>
        <shortName evidence="1">SCS-beta</shortName>
    </alternativeName>
</protein>
<reference key="1">
    <citation type="journal article" date="2008" name="Infect. Immun.">
        <title>Genomic comparison of virulent Rickettsia rickettsii Sheila Smith and avirulent Rickettsia rickettsii Iowa.</title>
        <authorList>
            <person name="Ellison D.W."/>
            <person name="Clark T.R."/>
            <person name="Sturdevant D.E."/>
            <person name="Virtaneva K."/>
            <person name="Porcella S.F."/>
            <person name="Hackstadt T."/>
        </authorList>
    </citation>
    <scope>NUCLEOTIDE SEQUENCE [LARGE SCALE GENOMIC DNA]</scope>
    <source>
        <strain>Iowa</strain>
    </source>
</reference>
<accession>B0BXJ5</accession>
<feature type="chain" id="PRO_1000082203" description="Succinate--CoA ligase [ADP-forming] subunit beta">
    <location>
        <begin position="1"/>
        <end position="386"/>
    </location>
</feature>
<feature type="domain" description="ATP-grasp" evidence="1">
    <location>
        <begin position="9"/>
        <end position="244"/>
    </location>
</feature>
<feature type="binding site" evidence="1">
    <location>
        <position position="46"/>
    </location>
    <ligand>
        <name>ATP</name>
        <dbReference type="ChEBI" id="CHEBI:30616"/>
    </ligand>
</feature>
<feature type="binding site" evidence="1">
    <location>
        <begin position="53"/>
        <end position="55"/>
    </location>
    <ligand>
        <name>ATP</name>
        <dbReference type="ChEBI" id="CHEBI:30616"/>
    </ligand>
</feature>
<feature type="binding site" evidence="1">
    <location>
        <position position="99"/>
    </location>
    <ligand>
        <name>ATP</name>
        <dbReference type="ChEBI" id="CHEBI:30616"/>
    </ligand>
</feature>
<feature type="binding site" evidence="1">
    <location>
        <position position="102"/>
    </location>
    <ligand>
        <name>ATP</name>
        <dbReference type="ChEBI" id="CHEBI:30616"/>
    </ligand>
</feature>
<feature type="binding site" evidence="1">
    <location>
        <position position="107"/>
    </location>
    <ligand>
        <name>ATP</name>
        <dbReference type="ChEBI" id="CHEBI:30616"/>
    </ligand>
</feature>
<feature type="binding site" evidence="1">
    <location>
        <position position="199"/>
    </location>
    <ligand>
        <name>Mg(2+)</name>
        <dbReference type="ChEBI" id="CHEBI:18420"/>
    </ligand>
</feature>
<feature type="binding site" evidence="1">
    <location>
        <position position="213"/>
    </location>
    <ligand>
        <name>Mg(2+)</name>
        <dbReference type="ChEBI" id="CHEBI:18420"/>
    </ligand>
</feature>
<feature type="binding site" evidence="1">
    <location>
        <position position="264"/>
    </location>
    <ligand>
        <name>substrate</name>
        <note>ligand shared with subunit alpha</note>
    </ligand>
</feature>
<feature type="binding site" evidence="1">
    <location>
        <begin position="321"/>
        <end position="323"/>
    </location>
    <ligand>
        <name>substrate</name>
        <note>ligand shared with subunit alpha</note>
    </ligand>
</feature>
<comment type="function">
    <text evidence="1">Succinyl-CoA synthetase functions in the citric acid cycle (TCA), coupling the hydrolysis of succinyl-CoA to the synthesis of either ATP or GTP and thus represents the only step of substrate-level phosphorylation in the TCA. The beta subunit provides nucleotide specificity of the enzyme and binds the substrate succinate, while the binding sites for coenzyme A and phosphate are found in the alpha subunit.</text>
</comment>
<comment type="catalytic activity">
    <reaction evidence="1">
        <text>succinate + ATP + CoA = succinyl-CoA + ADP + phosphate</text>
        <dbReference type="Rhea" id="RHEA:17661"/>
        <dbReference type="ChEBI" id="CHEBI:30031"/>
        <dbReference type="ChEBI" id="CHEBI:30616"/>
        <dbReference type="ChEBI" id="CHEBI:43474"/>
        <dbReference type="ChEBI" id="CHEBI:57287"/>
        <dbReference type="ChEBI" id="CHEBI:57292"/>
        <dbReference type="ChEBI" id="CHEBI:456216"/>
        <dbReference type="EC" id="6.2.1.5"/>
    </reaction>
    <physiologicalReaction direction="right-to-left" evidence="1">
        <dbReference type="Rhea" id="RHEA:17663"/>
    </physiologicalReaction>
</comment>
<comment type="catalytic activity">
    <reaction evidence="1">
        <text>GTP + succinate + CoA = succinyl-CoA + GDP + phosphate</text>
        <dbReference type="Rhea" id="RHEA:22120"/>
        <dbReference type="ChEBI" id="CHEBI:30031"/>
        <dbReference type="ChEBI" id="CHEBI:37565"/>
        <dbReference type="ChEBI" id="CHEBI:43474"/>
        <dbReference type="ChEBI" id="CHEBI:57287"/>
        <dbReference type="ChEBI" id="CHEBI:57292"/>
        <dbReference type="ChEBI" id="CHEBI:58189"/>
    </reaction>
    <physiologicalReaction direction="right-to-left" evidence="1">
        <dbReference type="Rhea" id="RHEA:22122"/>
    </physiologicalReaction>
</comment>
<comment type="cofactor">
    <cofactor evidence="1">
        <name>Mg(2+)</name>
        <dbReference type="ChEBI" id="CHEBI:18420"/>
    </cofactor>
    <text evidence="1">Binds 1 Mg(2+) ion per subunit.</text>
</comment>
<comment type="pathway">
    <text evidence="1">Carbohydrate metabolism; tricarboxylic acid cycle; succinate from succinyl-CoA (ligase route): step 1/1.</text>
</comment>
<comment type="subunit">
    <text evidence="1">Heterotetramer of two alpha and two beta subunits.</text>
</comment>
<comment type="similarity">
    <text evidence="1">Belongs to the succinate/malate CoA ligase beta subunit family.</text>
</comment>
<organism>
    <name type="scientific">Rickettsia rickettsii (strain Iowa)</name>
    <dbReference type="NCBI Taxonomy" id="452659"/>
    <lineage>
        <taxon>Bacteria</taxon>
        <taxon>Pseudomonadati</taxon>
        <taxon>Pseudomonadota</taxon>
        <taxon>Alphaproteobacteria</taxon>
        <taxon>Rickettsiales</taxon>
        <taxon>Rickettsiaceae</taxon>
        <taxon>Rickettsieae</taxon>
        <taxon>Rickettsia</taxon>
        <taxon>spotted fever group</taxon>
    </lineage>
</organism>
<name>SUCC_RICRO</name>
<sequence length="386" mass="41827">MNIHEYQAKEILRKYGVPTSTGLVVTKTEKINETIDKLNTEVYVVKAQIHAGGRGKAGGVKVVKSKEEAKKVAHDMFGINLVTHQTGPQGQKVNRLYIESGCEILKEYYFSIVFDRSASCITFIASTEGGVDIEEVAEKTPEKIIKFSVDPATGLQDFHMRGIAYELGFKDNQAKQMKEIVKSVYNAFIETDAAQIEINPLIVNSDGNLLALDAKITFDDNGLLRHPNITAMRDHDEEDPLETRAANAGLSYVKMDGNIGCMVNGAGLAMATMDIIKLYGASPANFLDVGGGADRERVKEALKIILSDKAVQGILVNIFGGIMRCDIIAEGIIAAAKDIGIKVPLVVRLAGTNVEKGKEILSNSGLEIIPAHDLADAANKIVEAIR</sequence>